<reference key="1">
    <citation type="journal article" date="2002" name="J. Bacteriol.">
        <title>Genome sequence of Yersinia pestis KIM.</title>
        <authorList>
            <person name="Deng W."/>
            <person name="Burland V."/>
            <person name="Plunkett G. III"/>
            <person name="Boutin A."/>
            <person name="Mayhew G.F."/>
            <person name="Liss P."/>
            <person name="Perna N.T."/>
            <person name="Rose D.J."/>
            <person name="Mau B."/>
            <person name="Zhou S."/>
            <person name="Schwartz D.C."/>
            <person name="Fetherston J.D."/>
            <person name="Lindler L.E."/>
            <person name="Brubaker R.R."/>
            <person name="Plano G.V."/>
            <person name="Straley S.C."/>
            <person name="McDonough K.A."/>
            <person name="Nilles M.L."/>
            <person name="Matson J.S."/>
            <person name="Blattner F.R."/>
            <person name="Perry R.D."/>
        </authorList>
    </citation>
    <scope>NUCLEOTIDE SEQUENCE [LARGE SCALE GENOMIC DNA]</scope>
    <source>
        <strain>KIM10+ / Biovar Mediaevalis</strain>
    </source>
</reference>
<reference key="2">
    <citation type="journal article" date="2001" name="Nature">
        <title>Genome sequence of Yersinia pestis, the causative agent of plague.</title>
        <authorList>
            <person name="Parkhill J."/>
            <person name="Wren B.W."/>
            <person name="Thomson N.R."/>
            <person name="Titball R.W."/>
            <person name="Holden M.T.G."/>
            <person name="Prentice M.B."/>
            <person name="Sebaihia M."/>
            <person name="James K.D."/>
            <person name="Churcher C.M."/>
            <person name="Mungall K.L."/>
            <person name="Baker S."/>
            <person name="Basham D."/>
            <person name="Bentley S.D."/>
            <person name="Brooks K."/>
            <person name="Cerdeno-Tarraga A.-M."/>
            <person name="Chillingworth T."/>
            <person name="Cronin A."/>
            <person name="Davies R.M."/>
            <person name="Davis P."/>
            <person name="Dougan G."/>
            <person name="Feltwell T."/>
            <person name="Hamlin N."/>
            <person name="Holroyd S."/>
            <person name="Jagels K."/>
            <person name="Karlyshev A.V."/>
            <person name="Leather S."/>
            <person name="Moule S."/>
            <person name="Oyston P.C.F."/>
            <person name="Quail M.A."/>
            <person name="Rutherford K.M."/>
            <person name="Simmonds M."/>
            <person name="Skelton J."/>
            <person name="Stevens K."/>
            <person name="Whitehead S."/>
            <person name="Barrell B.G."/>
        </authorList>
    </citation>
    <scope>NUCLEOTIDE SEQUENCE [LARGE SCALE GENOMIC DNA]</scope>
    <source>
        <strain>CO-92 / Biovar Orientalis</strain>
    </source>
</reference>
<reference key="3">
    <citation type="journal article" date="2004" name="DNA Res.">
        <title>Complete genome sequence of Yersinia pestis strain 91001, an isolate avirulent to humans.</title>
        <authorList>
            <person name="Song Y."/>
            <person name="Tong Z."/>
            <person name="Wang J."/>
            <person name="Wang L."/>
            <person name="Guo Z."/>
            <person name="Han Y."/>
            <person name="Zhang J."/>
            <person name="Pei D."/>
            <person name="Zhou D."/>
            <person name="Qin H."/>
            <person name="Pang X."/>
            <person name="Han Y."/>
            <person name="Zhai J."/>
            <person name="Li M."/>
            <person name="Cui B."/>
            <person name="Qi Z."/>
            <person name="Jin L."/>
            <person name="Dai R."/>
            <person name="Chen F."/>
            <person name="Li S."/>
            <person name="Ye C."/>
            <person name="Du Z."/>
            <person name="Lin W."/>
            <person name="Wang J."/>
            <person name="Yu J."/>
            <person name="Yang H."/>
            <person name="Wang J."/>
            <person name="Huang P."/>
            <person name="Yang R."/>
        </authorList>
    </citation>
    <scope>NUCLEOTIDE SEQUENCE [LARGE SCALE GENOMIC DNA]</scope>
    <source>
        <strain>91001 / Biovar Mediaevalis</strain>
    </source>
</reference>
<keyword id="KW-0001">2Fe-2S</keyword>
<keyword id="KW-0004">4Fe-4S</keyword>
<keyword id="KW-0093">Biotin biosynthesis</keyword>
<keyword id="KW-0408">Iron</keyword>
<keyword id="KW-0411">Iron-sulfur</keyword>
<keyword id="KW-0479">Metal-binding</keyword>
<keyword id="KW-1185">Reference proteome</keyword>
<keyword id="KW-0949">S-adenosyl-L-methionine</keyword>
<keyword id="KW-0808">Transferase</keyword>
<protein>
    <recommendedName>
        <fullName evidence="1">Biotin synthase</fullName>
        <ecNumber evidence="1">2.8.1.6</ecNumber>
    </recommendedName>
</protein>
<proteinExistence type="inferred from homology"/>
<organism>
    <name type="scientific">Yersinia pestis</name>
    <dbReference type="NCBI Taxonomy" id="632"/>
    <lineage>
        <taxon>Bacteria</taxon>
        <taxon>Pseudomonadati</taxon>
        <taxon>Pseudomonadota</taxon>
        <taxon>Gammaproteobacteria</taxon>
        <taxon>Enterobacterales</taxon>
        <taxon>Yersiniaceae</taxon>
        <taxon>Yersinia</taxon>
    </lineage>
</organism>
<feature type="chain" id="PRO_0000381723" description="Biotin synthase">
    <location>
        <begin position="1"/>
        <end position="345"/>
    </location>
</feature>
<feature type="domain" description="Radical SAM core" evidence="2">
    <location>
        <begin position="38"/>
        <end position="256"/>
    </location>
</feature>
<feature type="binding site" evidence="1">
    <location>
        <position position="53"/>
    </location>
    <ligand>
        <name>[4Fe-4S] cluster</name>
        <dbReference type="ChEBI" id="CHEBI:49883"/>
        <note>4Fe-4S-S-AdoMet</note>
    </ligand>
</feature>
<feature type="binding site" evidence="1">
    <location>
        <position position="57"/>
    </location>
    <ligand>
        <name>[4Fe-4S] cluster</name>
        <dbReference type="ChEBI" id="CHEBI:49883"/>
        <note>4Fe-4S-S-AdoMet</note>
    </ligand>
</feature>
<feature type="binding site" evidence="1">
    <location>
        <position position="60"/>
    </location>
    <ligand>
        <name>[4Fe-4S] cluster</name>
        <dbReference type="ChEBI" id="CHEBI:49883"/>
        <note>4Fe-4S-S-AdoMet</note>
    </ligand>
</feature>
<feature type="binding site" evidence="1">
    <location>
        <position position="97"/>
    </location>
    <ligand>
        <name>[2Fe-2S] cluster</name>
        <dbReference type="ChEBI" id="CHEBI:190135"/>
    </ligand>
</feature>
<feature type="binding site" evidence="1">
    <location>
        <position position="128"/>
    </location>
    <ligand>
        <name>[2Fe-2S] cluster</name>
        <dbReference type="ChEBI" id="CHEBI:190135"/>
    </ligand>
</feature>
<feature type="binding site" evidence="1">
    <location>
        <position position="188"/>
    </location>
    <ligand>
        <name>[2Fe-2S] cluster</name>
        <dbReference type="ChEBI" id="CHEBI:190135"/>
    </ligand>
</feature>
<feature type="binding site" evidence="1">
    <location>
        <position position="260"/>
    </location>
    <ligand>
        <name>[2Fe-2S] cluster</name>
        <dbReference type="ChEBI" id="CHEBI:190135"/>
    </ligand>
</feature>
<dbReference type="EC" id="2.8.1.6" evidence="1"/>
<dbReference type="EMBL" id="AE009952">
    <property type="protein sequence ID" value="AAM86582.1"/>
    <property type="molecule type" value="Genomic_DNA"/>
</dbReference>
<dbReference type="EMBL" id="AE017042">
    <property type="protein sequence ID" value="AAS61260.1"/>
    <property type="molecule type" value="Genomic_DNA"/>
</dbReference>
<dbReference type="EMBL" id="AL590842">
    <property type="protein sequence ID" value="CAL19815.1"/>
    <property type="molecule type" value="Genomic_DNA"/>
</dbReference>
<dbReference type="PIR" id="AE0141">
    <property type="entry name" value="AE0141"/>
</dbReference>
<dbReference type="RefSeq" id="WP_002210762.1">
    <property type="nucleotide sequence ID" value="NZ_WUCM01000016.1"/>
</dbReference>
<dbReference type="RefSeq" id="YP_002346190.1">
    <property type="nucleotide sequence ID" value="NC_003143.1"/>
</dbReference>
<dbReference type="SMR" id="Q7CH65"/>
<dbReference type="STRING" id="214092.YPO1151"/>
<dbReference type="PaxDb" id="214092-YPO1151"/>
<dbReference type="DNASU" id="1147978"/>
<dbReference type="EnsemblBacteria" id="AAS61260">
    <property type="protein sequence ID" value="AAS61260"/>
    <property type="gene ID" value="YP_1009"/>
</dbReference>
<dbReference type="GeneID" id="57977290"/>
<dbReference type="KEGG" id="ype:YPO1151"/>
<dbReference type="KEGG" id="ypk:y3031"/>
<dbReference type="KEGG" id="ypm:YP_1009"/>
<dbReference type="PATRIC" id="fig|214092.21.peg.1446"/>
<dbReference type="eggNOG" id="COG0502">
    <property type="taxonomic scope" value="Bacteria"/>
</dbReference>
<dbReference type="HOGENOM" id="CLU_033172_1_2_6"/>
<dbReference type="OMA" id="NICTTHT"/>
<dbReference type="OrthoDB" id="9786826at2"/>
<dbReference type="UniPathway" id="UPA00078">
    <property type="reaction ID" value="UER00162"/>
</dbReference>
<dbReference type="Proteomes" id="UP000000815">
    <property type="component" value="Chromosome"/>
</dbReference>
<dbReference type="Proteomes" id="UP000001019">
    <property type="component" value="Chromosome"/>
</dbReference>
<dbReference type="Proteomes" id="UP000002490">
    <property type="component" value="Chromosome"/>
</dbReference>
<dbReference type="GO" id="GO:0051537">
    <property type="term" value="F:2 iron, 2 sulfur cluster binding"/>
    <property type="evidence" value="ECO:0000318"/>
    <property type="project" value="GO_Central"/>
</dbReference>
<dbReference type="GO" id="GO:0051539">
    <property type="term" value="F:4 iron, 4 sulfur cluster binding"/>
    <property type="evidence" value="ECO:0007669"/>
    <property type="project" value="UniProtKB-KW"/>
</dbReference>
<dbReference type="GO" id="GO:0004076">
    <property type="term" value="F:biotin synthase activity"/>
    <property type="evidence" value="ECO:0000318"/>
    <property type="project" value="GO_Central"/>
</dbReference>
<dbReference type="GO" id="GO:0005506">
    <property type="term" value="F:iron ion binding"/>
    <property type="evidence" value="ECO:0007669"/>
    <property type="project" value="UniProtKB-UniRule"/>
</dbReference>
<dbReference type="GO" id="GO:0009102">
    <property type="term" value="P:biotin biosynthetic process"/>
    <property type="evidence" value="ECO:0000318"/>
    <property type="project" value="GO_Central"/>
</dbReference>
<dbReference type="CDD" id="cd01335">
    <property type="entry name" value="Radical_SAM"/>
    <property type="match status" value="1"/>
</dbReference>
<dbReference type="FunFam" id="3.20.20.70:FF:000011">
    <property type="entry name" value="Biotin synthase"/>
    <property type="match status" value="1"/>
</dbReference>
<dbReference type="Gene3D" id="3.20.20.70">
    <property type="entry name" value="Aldolase class I"/>
    <property type="match status" value="1"/>
</dbReference>
<dbReference type="HAMAP" id="MF_01694">
    <property type="entry name" value="BioB"/>
    <property type="match status" value="1"/>
</dbReference>
<dbReference type="InterPro" id="IPR013785">
    <property type="entry name" value="Aldolase_TIM"/>
</dbReference>
<dbReference type="InterPro" id="IPR010722">
    <property type="entry name" value="BATS_dom"/>
</dbReference>
<dbReference type="InterPro" id="IPR002684">
    <property type="entry name" value="Biotin_synth/BioAB"/>
</dbReference>
<dbReference type="InterPro" id="IPR024177">
    <property type="entry name" value="Biotin_synthase"/>
</dbReference>
<dbReference type="InterPro" id="IPR006638">
    <property type="entry name" value="Elp3/MiaA/NifB-like_rSAM"/>
</dbReference>
<dbReference type="InterPro" id="IPR007197">
    <property type="entry name" value="rSAM"/>
</dbReference>
<dbReference type="NCBIfam" id="TIGR00433">
    <property type="entry name" value="bioB"/>
    <property type="match status" value="1"/>
</dbReference>
<dbReference type="PANTHER" id="PTHR22976">
    <property type="entry name" value="BIOTIN SYNTHASE"/>
    <property type="match status" value="1"/>
</dbReference>
<dbReference type="PANTHER" id="PTHR22976:SF2">
    <property type="entry name" value="BIOTIN SYNTHASE, MITOCHONDRIAL"/>
    <property type="match status" value="1"/>
</dbReference>
<dbReference type="Pfam" id="PF06968">
    <property type="entry name" value="BATS"/>
    <property type="match status" value="1"/>
</dbReference>
<dbReference type="Pfam" id="PF04055">
    <property type="entry name" value="Radical_SAM"/>
    <property type="match status" value="1"/>
</dbReference>
<dbReference type="PIRSF" id="PIRSF001619">
    <property type="entry name" value="Biotin_synth"/>
    <property type="match status" value="1"/>
</dbReference>
<dbReference type="SFLD" id="SFLDF00272">
    <property type="entry name" value="biotin_synthase"/>
    <property type="match status" value="1"/>
</dbReference>
<dbReference type="SFLD" id="SFLDS00029">
    <property type="entry name" value="Radical_SAM"/>
    <property type="match status" value="1"/>
</dbReference>
<dbReference type="SMART" id="SM00876">
    <property type="entry name" value="BATS"/>
    <property type="match status" value="1"/>
</dbReference>
<dbReference type="SMART" id="SM00729">
    <property type="entry name" value="Elp3"/>
    <property type="match status" value="1"/>
</dbReference>
<dbReference type="SUPFAM" id="SSF102114">
    <property type="entry name" value="Radical SAM enzymes"/>
    <property type="match status" value="1"/>
</dbReference>
<dbReference type="PROSITE" id="PS51918">
    <property type="entry name" value="RADICAL_SAM"/>
    <property type="match status" value="1"/>
</dbReference>
<evidence type="ECO:0000255" key="1">
    <source>
        <dbReference type="HAMAP-Rule" id="MF_01694"/>
    </source>
</evidence>
<evidence type="ECO:0000255" key="2">
    <source>
        <dbReference type="PROSITE-ProRule" id="PRU01266"/>
    </source>
</evidence>
<gene>
    <name evidence="1" type="primary">bioB</name>
    <name type="ordered locus">YPO1151</name>
    <name type="ordered locus">y3031</name>
    <name type="ordered locus">YP_1009</name>
</gene>
<name>BIOB_YERPE</name>
<accession>Q7CH65</accession>
<accession>Q74W80</accession>
<sequence>MATYHHWTVGQALALFDKPLLELLFEAQQVHRQHFDPRQVQVSTLLSIKTGACPEDCKYCPQSSRYKTGLESERLMQVEQVLESAKKAKAAGSTRFCMGAAWKNPHERDMPYLAKMVEGVKALGMETCMTLGSLSKQQAHRLADAGLDYYNHNLDTSPEFYGSIITTRSYQERLDTLNEVRDAGIKVCSGGIVGLGETVRDRAGLLVQLANLPKPPESVPINMLVKVKGTPLENNAEVDAFEFIRTIAVARIMMPSSYVRLSAGREQMNEQTQAMCFMAGANSIFYGCKLLTTPNPDEDKDLQLFRKLGLNPQQTATSHGDREQQQALTEQLLHGDTAQFYNAAV</sequence>
<comment type="function">
    <text evidence="1">Catalyzes the conversion of dethiobiotin (DTB) to biotin by the insertion of a sulfur atom into dethiobiotin via a radical-based mechanism.</text>
</comment>
<comment type="catalytic activity">
    <reaction evidence="1">
        <text>(4R,5S)-dethiobiotin + (sulfur carrier)-SH + 2 reduced [2Fe-2S]-[ferredoxin] + 2 S-adenosyl-L-methionine = (sulfur carrier)-H + biotin + 2 5'-deoxyadenosine + 2 L-methionine + 2 oxidized [2Fe-2S]-[ferredoxin]</text>
        <dbReference type="Rhea" id="RHEA:22060"/>
        <dbReference type="Rhea" id="RHEA-COMP:10000"/>
        <dbReference type="Rhea" id="RHEA-COMP:10001"/>
        <dbReference type="Rhea" id="RHEA-COMP:14737"/>
        <dbReference type="Rhea" id="RHEA-COMP:14739"/>
        <dbReference type="ChEBI" id="CHEBI:17319"/>
        <dbReference type="ChEBI" id="CHEBI:29917"/>
        <dbReference type="ChEBI" id="CHEBI:33737"/>
        <dbReference type="ChEBI" id="CHEBI:33738"/>
        <dbReference type="ChEBI" id="CHEBI:57586"/>
        <dbReference type="ChEBI" id="CHEBI:57844"/>
        <dbReference type="ChEBI" id="CHEBI:59789"/>
        <dbReference type="ChEBI" id="CHEBI:64428"/>
        <dbReference type="ChEBI" id="CHEBI:149473"/>
        <dbReference type="EC" id="2.8.1.6"/>
    </reaction>
</comment>
<comment type="cofactor">
    <cofactor evidence="1">
        <name>[4Fe-4S] cluster</name>
        <dbReference type="ChEBI" id="CHEBI:49883"/>
    </cofactor>
    <text evidence="1">Binds 1 [4Fe-4S] cluster. The cluster is coordinated with 3 cysteines and an exchangeable S-adenosyl-L-methionine.</text>
</comment>
<comment type="cofactor">
    <cofactor evidence="1">
        <name>[2Fe-2S] cluster</name>
        <dbReference type="ChEBI" id="CHEBI:190135"/>
    </cofactor>
    <text evidence="1">Binds 1 [2Fe-2S] cluster. The cluster is coordinated with 3 cysteines and 1 arginine.</text>
</comment>
<comment type="pathway">
    <text evidence="1">Cofactor biosynthesis; biotin biosynthesis; biotin from 7,8-diaminononanoate: step 2/2.</text>
</comment>
<comment type="subunit">
    <text evidence="1">Homodimer.</text>
</comment>
<comment type="similarity">
    <text evidence="1">Belongs to the radical SAM superfamily. Biotin synthase family.</text>
</comment>